<sequence length="706" mass="78956">MSTAVAEFKPSEKLLKTRNIGISAHIDSGKTTLTERILFYTNRIHAIHEVRGKDGVGAKMDSMDLERERGITIQSAATYCQWKNHTINIIDTPGHVDFTVEVERSLRVLDSAILVLCGVAGVQSQSITVDRQMRRYNVPRVAFINKLDRTGANPFRVIEQLKEKLKHNAVPVQIPIGLENDLKGVVDLVTMKAYYFEGKDGMDIQEKEIPDDLKELANKKHEELLDAASMFSDELTEALLEGTPTEEMIKKAIRTGTIELKITPVFMGSAFKNKGVQKLLDGVLDYLASPVDVKNKALDQNNNEEMIVLESNYEKPLVCLAFKLEDGRYGQLTYVRVYQGKLSKGMTIYNMSNNKKHNVGRLCRMHSDEMEDIDSAEAGDIIALFGIDCASGDTFTDGKLKVSMESMFVPAPVISLTIEAKESKHLNNLAKALNRFTKEDPTFQTHVDPESGQTIIKGMGELHLEVYIERMKREYGVELITGAPQVAYRETITSKADFDYTHKKQTGGQGQFGRVAGYMEPIPLEETLDYDFVNKVVGGAIPREYIQSVDKGFKSCLERGSLIGFPIIGVRCVINDGAYHDVDSSDMAFQIAGRYAFRQGFNKANPQILEPIMKVEVDGPSEFQGAILGSLNQRRGMILNTTEEDAYCKTEAEVPLADMFGYSTVLRSSTQGKAEFSMEFSRYAPVPRNVAEELMKKYKVNNKDED</sequence>
<dbReference type="EMBL" id="CP000348">
    <property type="protein sequence ID" value="ABJ80044.1"/>
    <property type="molecule type" value="Genomic_DNA"/>
</dbReference>
<dbReference type="RefSeq" id="WP_011670981.1">
    <property type="nucleotide sequence ID" value="NC_008508.1"/>
</dbReference>
<dbReference type="SMR" id="Q04Y01"/>
<dbReference type="KEGG" id="lbl:LBL_2696"/>
<dbReference type="HOGENOM" id="CLU_002794_4_1_12"/>
<dbReference type="GO" id="GO:0005737">
    <property type="term" value="C:cytoplasm"/>
    <property type="evidence" value="ECO:0007669"/>
    <property type="project" value="UniProtKB-SubCell"/>
</dbReference>
<dbReference type="GO" id="GO:0005525">
    <property type="term" value="F:GTP binding"/>
    <property type="evidence" value="ECO:0007669"/>
    <property type="project" value="UniProtKB-UniRule"/>
</dbReference>
<dbReference type="GO" id="GO:0003924">
    <property type="term" value="F:GTPase activity"/>
    <property type="evidence" value="ECO:0007669"/>
    <property type="project" value="InterPro"/>
</dbReference>
<dbReference type="GO" id="GO:0003746">
    <property type="term" value="F:translation elongation factor activity"/>
    <property type="evidence" value="ECO:0007669"/>
    <property type="project" value="UniProtKB-UniRule"/>
</dbReference>
<dbReference type="CDD" id="cd01886">
    <property type="entry name" value="EF-G"/>
    <property type="match status" value="1"/>
</dbReference>
<dbReference type="CDD" id="cd16262">
    <property type="entry name" value="EFG_III"/>
    <property type="match status" value="1"/>
</dbReference>
<dbReference type="CDD" id="cd01434">
    <property type="entry name" value="EFG_mtEFG1_IV"/>
    <property type="match status" value="1"/>
</dbReference>
<dbReference type="CDD" id="cd04091">
    <property type="entry name" value="mtEFG1_II_like"/>
    <property type="match status" value="1"/>
</dbReference>
<dbReference type="FunFam" id="3.30.230.10:FF:000003">
    <property type="entry name" value="Elongation factor G"/>
    <property type="match status" value="1"/>
</dbReference>
<dbReference type="FunFam" id="3.30.70.240:FF:000001">
    <property type="entry name" value="Elongation factor G"/>
    <property type="match status" value="1"/>
</dbReference>
<dbReference type="FunFam" id="3.30.70.870:FF:000001">
    <property type="entry name" value="Elongation factor G"/>
    <property type="match status" value="1"/>
</dbReference>
<dbReference type="FunFam" id="3.40.50.300:FF:001393">
    <property type="entry name" value="Elongation factor G"/>
    <property type="match status" value="1"/>
</dbReference>
<dbReference type="FunFam" id="2.40.30.10:FF:000022">
    <property type="entry name" value="Elongation factor G, mitochondrial"/>
    <property type="match status" value="1"/>
</dbReference>
<dbReference type="Gene3D" id="3.30.230.10">
    <property type="match status" value="1"/>
</dbReference>
<dbReference type="Gene3D" id="3.30.70.240">
    <property type="match status" value="1"/>
</dbReference>
<dbReference type="Gene3D" id="3.30.70.870">
    <property type="entry name" value="Elongation Factor G (Translational Gtpase), domain 3"/>
    <property type="match status" value="1"/>
</dbReference>
<dbReference type="Gene3D" id="3.40.50.300">
    <property type="entry name" value="P-loop containing nucleotide triphosphate hydrolases"/>
    <property type="match status" value="1"/>
</dbReference>
<dbReference type="Gene3D" id="2.40.30.10">
    <property type="entry name" value="Translation factors"/>
    <property type="match status" value="1"/>
</dbReference>
<dbReference type="HAMAP" id="MF_00054_B">
    <property type="entry name" value="EF_G_EF_2_B"/>
    <property type="match status" value="1"/>
</dbReference>
<dbReference type="InterPro" id="IPR041095">
    <property type="entry name" value="EFG_II"/>
</dbReference>
<dbReference type="InterPro" id="IPR009022">
    <property type="entry name" value="EFG_III"/>
</dbReference>
<dbReference type="InterPro" id="IPR035647">
    <property type="entry name" value="EFG_III/V"/>
</dbReference>
<dbReference type="InterPro" id="IPR047872">
    <property type="entry name" value="EFG_IV"/>
</dbReference>
<dbReference type="InterPro" id="IPR000640">
    <property type="entry name" value="EFG_V-like"/>
</dbReference>
<dbReference type="InterPro" id="IPR004161">
    <property type="entry name" value="EFTu-like_2"/>
</dbReference>
<dbReference type="InterPro" id="IPR031157">
    <property type="entry name" value="G_TR_CS"/>
</dbReference>
<dbReference type="InterPro" id="IPR027417">
    <property type="entry name" value="P-loop_NTPase"/>
</dbReference>
<dbReference type="InterPro" id="IPR020568">
    <property type="entry name" value="Ribosomal_Su5_D2-typ_SF"/>
</dbReference>
<dbReference type="InterPro" id="IPR014721">
    <property type="entry name" value="Ribsml_uS5_D2-typ_fold_subgr"/>
</dbReference>
<dbReference type="InterPro" id="IPR005225">
    <property type="entry name" value="Small_GTP-bd"/>
</dbReference>
<dbReference type="InterPro" id="IPR000795">
    <property type="entry name" value="T_Tr_GTP-bd_dom"/>
</dbReference>
<dbReference type="InterPro" id="IPR009000">
    <property type="entry name" value="Transl_B-barrel_sf"/>
</dbReference>
<dbReference type="InterPro" id="IPR004540">
    <property type="entry name" value="Transl_elong_EFG/EF2"/>
</dbReference>
<dbReference type="InterPro" id="IPR005517">
    <property type="entry name" value="Transl_elong_EFG/EF2_IV"/>
</dbReference>
<dbReference type="NCBIfam" id="TIGR00484">
    <property type="entry name" value="EF-G"/>
    <property type="match status" value="1"/>
</dbReference>
<dbReference type="NCBIfam" id="NF009381">
    <property type="entry name" value="PRK12740.1-5"/>
    <property type="match status" value="1"/>
</dbReference>
<dbReference type="NCBIfam" id="TIGR00231">
    <property type="entry name" value="small_GTP"/>
    <property type="match status" value="1"/>
</dbReference>
<dbReference type="PANTHER" id="PTHR43636">
    <property type="entry name" value="ELONGATION FACTOR G, MITOCHONDRIAL"/>
    <property type="match status" value="1"/>
</dbReference>
<dbReference type="PANTHER" id="PTHR43636:SF2">
    <property type="entry name" value="ELONGATION FACTOR G, MITOCHONDRIAL"/>
    <property type="match status" value="1"/>
</dbReference>
<dbReference type="Pfam" id="PF00679">
    <property type="entry name" value="EFG_C"/>
    <property type="match status" value="1"/>
</dbReference>
<dbReference type="Pfam" id="PF14492">
    <property type="entry name" value="EFG_III"/>
    <property type="match status" value="1"/>
</dbReference>
<dbReference type="Pfam" id="PF03764">
    <property type="entry name" value="EFG_IV"/>
    <property type="match status" value="1"/>
</dbReference>
<dbReference type="Pfam" id="PF00009">
    <property type="entry name" value="GTP_EFTU"/>
    <property type="match status" value="1"/>
</dbReference>
<dbReference type="Pfam" id="PF03144">
    <property type="entry name" value="GTP_EFTU_D2"/>
    <property type="match status" value="1"/>
</dbReference>
<dbReference type="PRINTS" id="PR00315">
    <property type="entry name" value="ELONGATNFCT"/>
</dbReference>
<dbReference type="SMART" id="SM00838">
    <property type="entry name" value="EFG_C"/>
    <property type="match status" value="1"/>
</dbReference>
<dbReference type="SMART" id="SM00889">
    <property type="entry name" value="EFG_IV"/>
    <property type="match status" value="1"/>
</dbReference>
<dbReference type="SUPFAM" id="SSF54980">
    <property type="entry name" value="EF-G C-terminal domain-like"/>
    <property type="match status" value="2"/>
</dbReference>
<dbReference type="SUPFAM" id="SSF52540">
    <property type="entry name" value="P-loop containing nucleoside triphosphate hydrolases"/>
    <property type="match status" value="1"/>
</dbReference>
<dbReference type="SUPFAM" id="SSF54211">
    <property type="entry name" value="Ribosomal protein S5 domain 2-like"/>
    <property type="match status" value="1"/>
</dbReference>
<dbReference type="SUPFAM" id="SSF50447">
    <property type="entry name" value="Translation proteins"/>
    <property type="match status" value="1"/>
</dbReference>
<dbReference type="PROSITE" id="PS00301">
    <property type="entry name" value="G_TR_1"/>
    <property type="match status" value="1"/>
</dbReference>
<dbReference type="PROSITE" id="PS51722">
    <property type="entry name" value="G_TR_2"/>
    <property type="match status" value="1"/>
</dbReference>
<feature type="chain" id="PRO_1000201470" description="Elongation factor G">
    <location>
        <begin position="1"/>
        <end position="706"/>
    </location>
</feature>
<feature type="domain" description="tr-type G">
    <location>
        <begin position="15"/>
        <end position="291"/>
    </location>
</feature>
<feature type="binding site" evidence="1">
    <location>
        <begin position="24"/>
        <end position="31"/>
    </location>
    <ligand>
        <name>GTP</name>
        <dbReference type="ChEBI" id="CHEBI:37565"/>
    </ligand>
</feature>
<feature type="binding site" evidence="1">
    <location>
        <begin position="91"/>
        <end position="95"/>
    </location>
    <ligand>
        <name>GTP</name>
        <dbReference type="ChEBI" id="CHEBI:37565"/>
    </ligand>
</feature>
<feature type="binding site" evidence="1">
    <location>
        <begin position="145"/>
        <end position="148"/>
    </location>
    <ligand>
        <name>GTP</name>
        <dbReference type="ChEBI" id="CHEBI:37565"/>
    </ligand>
</feature>
<evidence type="ECO:0000255" key="1">
    <source>
        <dbReference type="HAMAP-Rule" id="MF_00054"/>
    </source>
</evidence>
<proteinExistence type="inferred from homology"/>
<organism>
    <name type="scientific">Leptospira borgpetersenii serovar Hardjo-bovis (strain L550)</name>
    <dbReference type="NCBI Taxonomy" id="355276"/>
    <lineage>
        <taxon>Bacteria</taxon>
        <taxon>Pseudomonadati</taxon>
        <taxon>Spirochaetota</taxon>
        <taxon>Spirochaetia</taxon>
        <taxon>Leptospirales</taxon>
        <taxon>Leptospiraceae</taxon>
        <taxon>Leptospira</taxon>
    </lineage>
</organism>
<accession>Q04Y01</accession>
<reference key="1">
    <citation type="journal article" date="2006" name="Proc. Natl. Acad. Sci. U.S.A.">
        <title>Genome reduction in Leptospira borgpetersenii reflects limited transmission potential.</title>
        <authorList>
            <person name="Bulach D.M."/>
            <person name="Zuerner R.L."/>
            <person name="Wilson P."/>
            <person name="Seemann T."/>
            <person name="McGrath A."/>
            <person name="Cullen P.A."/>
            <person name="Davis J."/>
            <person name="Johnson M."/>
            <person name="Kuczek E."/>
            <person name="Alt D.P."/>
            <person name="Peterson-Burch B."/>
            <person name="Coppel R.L."/>
            <person name="Rood J.I."/>
            <person name="Davies J.K."/>
            <person name="Adler B."/>
        </authorList>
    </citation>
    <scope>NUCLEOTIDE SEQUENCE [LARGE SCALE GENOMIC DNA]</scope>
    <source>
        <strain>L550</strain>
    </source>
</reference>
<keyword id="KW-0963">Cytoplasm</keyword>
<keyword id="KW-0251">Elongation factor</keyword>
<keyword id="KW-0342">GTP-binding</keyword>
<keyword id="KW-0547">Nucleotide-binding</keyword>
<keyword id="KW-0648">Protein biosynthesis</keyword>
<gene>
    <name evidence="1" type="primary">fusA</name>
    <name type="ordered locus">LBL_2696</name>
</gene>
<comment type="function">
    <text evidence="1">Catalyzes the GTP-dependent ribosomal translocation step during translation elongation. During this step, the ribosome changes from the pre-translocational (PRE) to the post-translocational (POST) state as the newly formed A-site-bound peptidyl-tRNA and P-site-bound deacylated tRNA move to the P and E sites, respectively. Catalyzes the coordinated movement of the two tRNA molecules, the mRNA and conformational changes in the ribosome.</text>
</comment>
<comment type="subcellular location">
    <subcellularLocation>
        <location evidence="1">Cytoplasm</location>
    </subcellularLocation>
</comment>
<comment type="similarity">
    <text evidence="1">Belongs to the TRAFAC class translation factor GTPase superfamily. Classic translation factor GTPase family. EF-G/EF-2 subfamily.</text>
</comment>
<protein>
    <recommendedName>
        <fullName evidence="1">Elongation factor G</fullName>
        <shortName evidence="1">EF-G</shortName>
    </recommendedName>
</protein>
<name>EFG_LEPBL</name>